<gene>
    <name evidence="1" type="primary">xerC</name>
    <name type="ordered locus">mlr4290</name>
</gene>
<protein>
    <recommendedName>
        <fullName evidence="1">Tyrosine recombinase XerC</fullName>
    </recommendedName>
</protein>
<feature type="chain" id="PRO_0000095320" description="Tyrosine recombinase XerC">
    <location>
        <begin position="1"/>
        <end position="312"/>
    </location>
</feature>
<feature type="domain" description="Core-binding (CB)" evidence="3">
    <location>
        <begin position="10"/>
        <end position="101"/>
    </location>
</feature>
<feature type="domain" description="Tyr recombinase" evidence="2">
    <location>
        <begin position="122"/>
        <end position="306"/>
    </location>
</feature>
<feature type="active site" evidence="1">
    <location>
        <position position="165"/>
    </location>
</feature>
<feature type="active site" evidence="1">
    <location>
        <position position="190"/>
    </location>
</feature>
<feature type="active site" evidence="1">
    <location>
        <position position="258"/>
    </location>
</feature>
<feature type="active site" evidence="1">
    <location>
        <position position="261"/>
    </location>
</feature>
<feature type="active site" evidence="1">
    <location>
        <position position="284"/>
    </location>
</feature>
<feature type="active site" description="O-(3'-phospho-DNA)-tyrosine intermediate" evidence="1">
    <location>
        <position position="293"/>
    </location>
</feature>
<organism>
    <name type="scientific">Mesorhizobium japonicum (strain LMG 29417 / CECT 9101 / MAFF 303099)</name>
    <name type="common">Mesorhizobium loti (strain MAFF 303099)</name>
    <dbReference type="NCBI Taxonomy" id="266835"/>
    <lineage>
        <taxon>Bacteria</taxon>
        <taxon>Pseudomonadati</taxon>
        <taxon>Pseudomonadota</taxon>
        <taxon>Alphaproteobacteria</taxon>
        <taxon>Hyphomicrobiales</taxon>
        <taxon>Phyllobacteriaceae</taxon>
        <taxon>Mesorhizobium</taxon>
    </lineage>
</organism>
<dbReference type="EMBL" id="BA000012">
    <property type="protein sequence ID" value="BAB50981.1"/>
    <property type="molecule type" value="Genomic_DNA"/>
</dbReference>
<dbReference type="RefSeq" id="WP_010912323.1">
    <property type="nucleotide sequence ID" value="NC_002678.2"/>
</dbReference>
<dbReference type="SMR" id="Q98ED9"/>
<dbReference type="KEGG" id="mlo:mlr4290"/>
<dbReference type="PATRIC" id="fig|266835.9.peg.3384"/>
<dbReference type="eggNOG" id="COG4974">
    <property type="taxonomic scope" value="Bacteria"/>
</dbReference>
<dbReference type="HOGENOM" id="CLU_027562_9_0_5"/>
<dbReference type="Proteomes" id="UP000000552">
    <property type="component" value="Chromosome"/>
</dbReference>
<dbReference type="GO" id="GO:0005737">
    <property type="term" value="C:cytoplasm"/>
    <property type="evidence" value="ECO:0007669"/>
    <property type="project" value="UniProtKB-SubCell"/>
</dbReference>
<dbReference type="GO" id="GO:0003677">
    <property type="term" value="F:DNA binding"/>
    <property type="evidence" value="ECO:0007669"/>
    <property type="project" value="UniProtKB-KW"/>
</dbReference>
<dbReference type="GO" id="GO:0009037">
    <property type="term" value="F:tyrosine-based site-specific recombinase activity"/>
    <property type="evidence" value="ECO:0007669"/>
    <property type="project" value="UniProtKB-UniRule"/>
</dbReference>
<dbReference type="GO" id="GO:0051301">
    <property type="term" value="P:cell division"/>
    <property type="evidence" value="ECO:0007669"/>
    <property type="project" value="UniProtKB-KW"/>
</dbReference>
<dbReference type="GO" id="GO:0007059">
    <property type="term" value="P:chromosome segregation"/>
    <property type="evidence" value="ECO:0007669"/>
    <property type="project" value="UniProtKB-UniRule"/>
</dbReference>
<dbReference type="GO" id="GO:0006313">
    <property type="term" value="P:DNA transposition"/>
    <property type="evidence" value="ECO:0007669"/>
    <property type="project" value="UniProtKB-UniRule"/>
</dbReference>
<dbReference type="Gene3D" id="1.10.150.130">
    <property type="match status" value="1"/>
</dbReference>
<dbReference type="Gene3D" id="1.10.443.10">
    <property type="entry name" value="Intergrase catalytic core"/>
    <property type="match status" value="1"/>
</dbReference>
<dbReference type="HAMAP" id="MF_01808">
    <property type="entry name" value="Recomb_XerC_XerD"/>
    <property type="match status" value="1"/>
</dbReference>
<dbReference type="InterPro" id="IPR044068">
    <property type="entry name" value="CB"/>
</dbReference>
<dbReference type="InterPro" id="IPR011010">
    <property type="entry name" value="DNA_brk_join_enz"/>
</dbReference>
<dbReference type="InterPro" id="IPR013762">
    <property type="entry name" value="Integrase-like_cat_sf"/>
</dbReference>
<dbReference type="InterPro" id="IPR002104">
    <property type="entry name" value="Integrase_catalytic"/>
</dbReference>
<dbReference type="InterPro" id="IPR010998">
    <property type="entry name" value="Integrase_recombinase_N"/>
</dbReference>
<dbReference type="InterPro" id="IPR004107">
    <property type="entry name" value="Integrase_SAM-like_N"/>
</dbReference>
<dbReference type="InterPro" id="IPR023009">
    <property type="entry name" value="Tyrosine_recombinase_XerC/XerD"/>
</dbReference>
<dbReference type="InterPro" id="IPR050090">
    <property type="entry name" value="Tyrosine_recombinase_XerCD"/>
</dbReference>
<dbReference type="PANTHER" id="PTHR30349">
    <property type="entry name" value="PHAGE INTEGRASE-RELATED"/>
    <property type="match status" value="1"/>
</dbReference>
<dbReference type="PANTHER" id="PTHR30349:SF90">
    <property type="entry name" value="TYROSINE RECOMBINASE XERD"/>
    <property type="match status" value="1"/>
</dbReference>
<dbReference type="Pfam" id="PF02899">
    <property type="entry name" value="Phage_int_SAM_1"/>
    <property type="match status" value="1"/>
</dbReference>
<dbReference type="Pfam" id="PF00589">
    <property type="entry name" value="Phage_integrase"/>
    <property type="match status" value="1"/>
</dbReference>
<dbReference type="SUPFAM" id="SSF56349">
    <property type="entry name" value="DNA breaking-rejoining enzymes"/>
    <property type="match status" value="1"/>
</dbReference>
<dbReference type="PROSITE" id="PS51900">
    <property type="entry name" value="CB"/>
    <property type="match status" value="1"/>
</dbReference>
<dbReference type="PROSITE" id="PS51898">
    <property type="entry name" value="TYR_RECOMBINASE"/>
    <property type="match status" value="1"/>
</dbReference>
<sequence length="312" mass="33665">MQEFLIPAKPDLQAARESWLKMLARERRLSPETVEAYERDTRQFLHFLTGHCGGSPGISDIANLRPADLRGFLAARRNAGAGARTLGRGLAGIRSLLRFLERRGLVNAAGAAALRAPRQPKSLPKPLTASDAKQVVSVEGQLAEEPWIAARNAAVLTLLYGSGLRISEALGLAGADLASETDTVLRVTGKGGKTRLVPVLPVALRAIAEYRRLCPYHLDPKGLLFRGARGGPLNPAIIQRDMAKLRSALNLPDTATPHALRHSFATHLLGRGGDLRTIQELLGHASLSTTQIYTGVDTARLLEIYESAHPRA</sequence>
<proteinExistence type="inferred from homology"/>
<reference key="1">
    <citation type="journal article" date="2000" name="DNA Res.">
        <title>Complete genome structure of the nitrogen-fixing symbiotic bacterium Mesorhizobium loti.</title>
        <authorList>
            <person name="Kaneko T."/>
            <person name="Nakamura Y."/>
            <person name="Sato S."/>
            <person name="Asamizu E."/>
            <person name="Kato T."/>
            <person name="Sasamoto S."/>
            <person name="Watanabe A."/>
            <person name="Idesawa K."/>
            <person name="Ishikawa A."/>
            <person name="Kawashima K."/>
            <person name="Kimura T."/>
            <person name="Kishida Y."/>
            <person name="Kiyokawa C."/>
            <person name="Kohara M."/>
            <person name="Matsumoto M."/>
            <person name="Matsuno A."/>
            <person name="Mochizuki Y."/>
            <person name="Nakayama S."/>
            <person name="Nakazaki N."/>
            <person name="Shimpo S."/>
            <person name="Sugimoto M."/>
            <person name="Takeuchi C."/>
            <person name="Yamada M."/>
            <person name="Tabata S."/>
        </authorList>
    </citation>
    <scope>NUCLEOTIDE SEQUENCE [LARGE SCALE GENOMIC DNA]</scope>
    <source>
        <strain>LMG 29417 / CECT 9101 / MAFF 303099</strain>
    </source>
</reference>
<keyword id="KW-0131">Cell cycle</keyword>
<keyword id="KW-0132">Cell division</keyword>
<keyword id="KW-0159">Chromosome partition</keyword>
<keyword id="KW-0963">Cytoplasm</keyword>
<keyword id="KW-0229">DNA integration</keyword>
<keyword id="KW-0233">DNA recombination</keyword>
<keyword id="KW-0238">DNA-binding</keyword>
<comment type="function">
    <text evidence="1">Site-specific tyrosine recombinase, which acts by catalyzing the cutting and rejoining of the recombining DNA molecules. The XerC-XerD complex is essential to convert dimers of the bacterial chromosome into monomers to permit their segregation at cell division. It also contributes to the segregational stability of plasmids.</text>
</comment>
<comment type="subunit">
    <text evidence="1">Forms a cyclic heterotetrameric complex composed of two molecules of XerC and two molecules of XerD.</text>
</comment>
<comment type="subcellular location">
    <subcellularLocation>
        <location evidence="1">Cytoplasm</location>
    </subcellularLocation>
</comment>
<comment type="similarity">
    <text evidence="1">Belongs to the 'phage' integrase family. XerC subfamily.</text>
</comment>
<name>XERC_RHILO</name>
<accession>Q98ED9</accession>
<evidence type="ECO:0000255" key="1">
    <source>
        <dbReference type="HAMAP-Rule" id="MF_01808"/>
    </source>
</evidence>
<evidence type="ECO:0000255" key="2">
    <source>
        <dbReference type="PROSITE-ProRule" id="PRU01246"/>
    </source>
</evidence>
<evidence type="ECO:0000255" key="3">
    <source>
        <dbReference type="PROSITE-ProRule" id="PRU01248"/>
    </source>
</evidence>